<accession>Q8XXY9</accession>
<keyword id="KW-0067">ATP-binding</keyword>
<keyword id="KW-0997">Cell inner membrane</keyword>
<keyword id="KW-1003">Cell membrane</keyword>
<keyword id="KW-0472">Membrane</keyword>
<keyword id="KW-0536">Nodulation</keyword>
<keyword id="KW-0547">Nucleotide-binding</keyword>
<keyword id="KW-1185">Reference proteome</keyword>
<keyword id="KW-1278">Translocase</keyword>
<keyword id="KW-0813">Transport</keyword>
<organism>
    <name type="scientific">Ralstonia nicotianae (strain ATCC BAA-1114 / GMI1000)</name>
    <name type="common">Ralstonia solanacearum</name>
    <dbReference type="NCBI Taxonomy" id="267608"/>
    <lineage>
        <taxon>Bacteria</taxon>
        <taxon>Pseudomonadati</taxon>
        <taxon>Pseudomonadota</taxon>
        <taxon>Betaproteobacteria</taxon>
        <taxon>Burkholderiales</taxon>
        <taxon>Burkholderiaceae</taxon>
        <taxon>Ralstonia</taxon>
        <taxon>Ralstonia solanacearum species complex</taxon>
    </lineage>
</organism>
<evidence type="ECO:0000255" key="1">
    <source>
        <dbReference type="HAMAP-Rule" id="MF_01704"/>
    </source>
</evidence>
<dbReference type="EC" id="7.6.2.-" evidence="1"/>
<dbReference type="EMBL" id="AL646052">
    <property type="protein sequence ID" value="CAD15676.1"/>
    <property type="molecule type" value="Genomic_DNA"/>
</dbReference>
<dbReference type="RefSeq" id="WP_011001910.1">
    <property type="nucleotide sequence ID" value="NC_003295.1"/>
</dbReference>
<dbReference type="SMR" id="Q8XXY9"/>
<dbReference type="STRING" id="267608.RSc1974"/>
<dbReference type="EnsemblBacteria" id="CAD15676">
    <property type="protein sequence ID" value="CAD15676"/>
    <property type="gene ID" value="RSc1974"/>
</dbReference>
<dbReference type="KEGG" id="rso:RSc1974"/>
<dbReference type="eggNOG" id="COG1131">
    <property type="taxonomic scope" value="Bacteria"/>
</dbReference>
<dbReference type="HOGENOM" id="CLU_000604_1_2_4"/>
<dbReference type="Proteomes" id="UP000001436">
    <property type="component" value="Chromosome"/>
</dbReference>
<dbReference type="GO" id="GO:0005886">
    <property type="term" value="C:plasma membrane"/>
    <property type="evidence" value="ECO:0007669"/>
    <property type="project" value="UniProtKB-SubCell"/>
</dbReference>
<dbReference type="GO" id="GO:0005524">
    <property type="term" value="F:ATP binding"/>
    <property type="evidence" value="ECO:0007669"/>
    <property type="project" value="UniProtKB-KW"/>
</dbReference>
<dbReference type="GO" id="GO:0016887">
    <property type="term" value="F:ATP hydrolysis activity"/>
    <property type="evidence" value="ECO:0007669"/>
    <property type="project" value="InterPro"/>
</dbReference>
<dbReference type="GO" id="GO:0022857">
    <property type="term" value="F:transmembrane transporter activity"/>
    <property type="evidence" value="ECO:0007669"/>
    <property type="project" value="InterPro"/>
</dbReference>
<dbReference type="CDD" id="cd03263">
    <property type="entry name" value="ABC_subfamily_A"/>
    <property type="match status" value="1"/>
</dbReference>
<dbReference type="FunFam" id="3.40.50.300:FF:000589">
    <property type="entry name" value="ABC transporter, ATP-binding subunit"/>
    <property type="match status" value="1"/>
</dbReference>
<dbReference type="Gene3D" id="3.40.50.300">
    <property type="entry name" value="P-loop containing nucleotide triphosphate hydrolases"/>
    <property type="match status" value="1"/>
</dbReference>
<dbReference type="InterPro" id="IPR003593">
    <property type="entry name" value="AAA+_ATPase"/>
</dbReference>
<dbReference type="InterPro" id="IPR003439">
    <property type="entry name" value="ABC_transporter-like_ATP-bd"/>
</dbReference>
<dbReference type="InterPro" id="IPR017871">
    <property type="entry name" value="ABC_transporter-like_CS"/>
</dbReference>
<dbReference type="InterPro" id="IPR050763">
    <property type="entry name" value="ABC_transporter_ATP-binding"/>
</dbReference>
<dbReference type="InterPro" id="IPR005978">
    <property type="entry name" value="ABC_transptNodI"/>
</dbReference>
<dbReference type="InterPro" id="IPR027417">
    <property type="entry name" value="P-loop_NTPase"/>
</dbReference>
<dbReference type="NCBIfam" id="TIGR01288">
    <property type="entry name" value="nodI"/>
    <property type="match status" value="1"/>
</dbReference>
<dbReference type="NCBIfam" id="NF010060">
    <property type="entry name" value="PRK13537.1"/>
    <property type="match status" value="1"/>
</dbReference>
<dbReference type="PANTHER" id="PTHR42711">
    <property type="entry name" value="ABC TRANSPORTER ATP-BINDING PROTEIN"/>
    <property type="match status" value="1"/>
</dbReference>
<dbReference type="PANTHER" id="PTHR42711:SF5">
    <property type="entry name" value="ABC TRANSPORTER ATP-BINDING PROTEIN NATA"/>
    <property type="match status" value="1"/>
</dbReference>
<dbReference type="Pfam" id="PF00005">
    <property type="entry name" value="ABC_tran"/>
    <property type="match status" value="1"/>
</dbReference>
<dbReference type="SMART" id="SM00382">
    <property type="entry name" value="AAA"/>
    <property type="match status" value="1"/>
</dbReference>
<dbReference type="SUPFAM" id="SSF52540">
    <property type="entry name" value="P-loop containing nucleoside triphosphate hydrolases"/>
    <property type="match status" value="1"/>
</dbReference>
<dbReference type="PROSITE" id="PS00211">
    <property type="entry name" value="ABC_TRANSPORTER_1"/>
    <property type="match status" value="1"/>
</dbReference>
<dbReference type="PROSITE" id="PS50893">
    <property type="entry name" value="ABC_TRANSPORTER_2"/>
    <property type="match status" value="1"/>
</dbReference>
<dbReference type="PROSITE" id="PS51240">
    <property type="entry name" value="NODI"/>
    <property type="match status" value="1"/>
</dbReference>
<gene>
    <name evidence="1" type="primary">nodI</name>
    <name type="ordered locus">RSc1974</name>
</gene>
<feature type="chain" id="PRO_0000272604" description="Nod factor export ATP-binding protein I">
    <location>
        <begin position="1"/>
        <end position="321"/>
    </location>
</feature>
<feature type="domain" description="ABC transporter" evidence="1">
    <location>
        <begin position="17"/>
        <end position="247"/>
    </location>
</feature>
<feature type="binding site" evidence="1">
    <location>
        <begin position="49"/>
        <end position="56"/>
    </location>
    <ligand>
        <name>ATP</name>
        <dbReference type="ChEBI" id="CHEBI:30616"/>
    </ligand>
</feature>
<reference key="1">
    <citation type="journal article" date="2002" name="Nature">
        <title>Genome sequence of the plant pathogen Ralstonia solanacearum.</title>
        <authorList>
            <person name="Salanoubat M."/>
            <person name="Genin S."/>
            <person name="Artiguenave F."/>
            <person name="Gouzy J."/>
            <person name="Mangenot S."/>
            <person name="Arlat M."/>
            <person name="Billault A."/>
            <person name="Brottier P."/>
            <person name="Camus J.-C."/>
            <person name="Cattolico L."/>
            <person name="Chandler M."/>
            <person name="Choisne N."/>
            <person name="Claudel-Renard C."/>
            <person name="Cunnac S."/>
            <person name="Demange N."/>
            <person name="Gaspin C."/>
            <person name="Lavie M."/>
            <person name="Moisan A."/>
            <person name="Robert C."/>
            <person name="Saurin W."/>
            <person name="Schiex T."/>
            <person name="Siguier P."/>
            <person name="Thebault P."/>
            <person name="Whalen M."/>
            <person name="Wincker P."/>
            <person name="Levy M."/>
            <person name="Weissenbach J."/>
            <person name="Boucher C.A."/>
        </authorList>
    </citation>
    <scope>NUCLEOTIDE SEQUENCE [LARGE SCALE GENOMIC DNA]</scope>
    <source>
        <strain>ATCC BAA-1114 / GMI1000</strain>
    </source>
</reference>
<comment type="function">
    <text evidence="1">Part of the ABC transporter complex NodIJ involved in the export of the nodulation factors (Nod factors), the bacterial signal molecules that induce symbiosis and subsequent nodulation induction. Nod factors are LCO (lipo-chitin oligosaccharide), a modified beta-1,4-linked N-acetylglucosamine oligosaccharide. This subunit is responsible for energy coupling to the transport system.</text>
</comment>
<comment type="subunit">
    <text evidence="1">The complex is composed of two ATP-binding proteins (NodI) and two transmembrane proteins (NodJ).</text>
</comment>
<comment type="subcellular location">
    <subcellularLocation>
        <location evidence="1">Cell inner membrane</location>
        <topology evidence="1">Peripheral membrane protein</topology>
    </subcellularLocation>
</comment>
<comment type="similarity">
    <text evidence="1">Belongs to the ABC transporter superfamily. Lipooligosaccharide exporter (TC 3.A.1.102) family.</text>
</comment>
<protein>
    <recommendedName>
        <fullName evidence="1">Nod factor export ATP-binding protein I</fullName>
        <ecNumber evidence="1">7.6.2.-</ecNumber>
    </recommendedName>
    <alternativeName>
        <fullName evidence="1">Nodulation ATP-binding protein I</fullName>
    </alternativeName>
</protein>
<proteinExistence type="inferred from homology"/>
<name>NODI_RALN1</name>
<sequence length="321" mass="35589">MRYEQPPGPGIGSTPILSVEGLRKRYGEQTVVDGLSFSVRRGQCFGLLGPNGAGKTTTLRMLLGMTMPDAGTLQLCGETIPGHAHRARMRVGVVPQFDNLDPDFTVSENLQIFGRYFGLPAATIRKRMPGLLEFARLEQKADAPVRALSGGMRRRLTVARSLINDPDVLVMDEPTTGLDPQARHLIWERLRSLLASGKTILLTTHFMEEAERLCDELCVIDNGRKIAQGKPHELITHEIGCDVVEVYGDDLPALRTLLAPLAERVEASGETLFCYARDPQPLVATLRSQTETHAMPGLRYLHRPANLEDVFLRLTGREMRD</sequence>